<sequence>MLTKVFQSGNSQAVRIPMDFRFDVDTVEIFRKENGDVVLRPVSKKTDDFLALFEGFDETFIQALEARDDLPPQERENL</sequence>
<feature type="chain" id="PRO_0000077909" description="Antitoxin VapB1">
    <location>
        <begin position="1"/>
        <end position="78"/>
    </location>
</feature>
<feature type="domain" description="SpoVT-AbrB" evidence="2">
    <location>
        <begin position="3"/>
        <end position="44"/>
    </location>
</feature>
<feature type="strand" evidence="4">
    <location>
        <begin position="1"/>
        <end position="8"/>
    </location>
</feature>
<feature type="strand" evidence="4">
    <location>
        <begin position="11"/>
        <end position="16"/>
    </location>
</feature>
<feature type="helix" evidence="4">
    <location>
        <begin position="18"/>
        <end position="20"/>
    </location>
</feature>
<feature type="strand" evidence="4">
    <location>
        <begin position="23"/>
        <end position="31"/>
    </location>
</feature>
<feature type="strand" evidence="4">
    <location>
        <begin position="37"/>
        <end position="41"/>
    </location>
</feature>
<feature type="helix" evidence="4">
    <location>
        <begin position="44"/>
        <end position="51"/>
    </location>
</feature>
<feature type="turn" evidence="4">
    <location>
        <begin position="52"/>
        <end position="55"/>
    </location>
</feature>
<feature type="helix" evidence="4">
    <location>
        <begin position="58"/>
        <end position="65"/>
    </location>
</feature>
<keyword id="KW-0002">3D-structure</keyword>
<keyword id="KW-0238">DNA-binding</keyword>
<keyword id="KW-1185">Reference proteome</keyword>
<keyword id="KW-1277">Toxin-antitoxin system</keyword>
<dbReference type="EMBL" id="L42023">
    <property type="protein sequence ID" value="AAC21984.1"/>
    <property type="molecule type" value="Genomic_DNA"/>
</dbReference>
<dbReference type="PIR" id="F64061">
    <property type="entry name" value="F64061"/>
</dbReference>
<dbReference type="RefSeq" id="NP_438486.1">
    <property type="nucleotide sequence ID" value="NC_000907.1"/>
</dbReference>
<dbReference type="PDB" id="6NKL">
    <property type="method" value="X-ray"/>
    <property type="resolution" value="2.20 A"/>
    <property type="chains" value="C/D=1-78"/>
</dbReference>
<dbReference type="PDBsum" id="6NKL"/>
<dbReference type="SMR" id="Q57534"/>
<dbReference type="STRING" id="71421.HI_0321"/>
<dbReference type="EnsemblBacteria" id="AAC21984">
    <property type="protein sequence ID" value="AAC21984"/>
    <property type="gene ID" value="HI_0321"/>
</dbReference>
<dbReference type="KEGG" id="hin:HI_0321"/>
<dbReference type="PATRIC" id="fig|71421.8.peg.338"/>
<dbReference type="eggNOG" id="COG4456">
    <property type="taxonomic scope" value="Bacteria"/>
</dbReference>
<dbReference type="HOGENOM" id="CLU_162018_2_1_6"/>
<dbReference type="OrthoDB" id="5298361at2"/>
<dbReference type="BioCyc" id="HINF71421:G1GJ1-337-MONOMER"/>
<dbReference type="Proteomes" id="UP000000579">
    <property type="component" value="Chromosome"/>
</dbReference>
<dbReference type="GO" id="GO:0003677">
    <property type="term" value="F:DNA binding"/>
    <property type="evidence" value="ECO:0007669"/>
    <property type="project" value="UniProtKB-KW"/>
</dbReference>
<dbReference type="Gene3D" id="2.10.260.10">
    <property type="match status" value="1"/>
</dbReference>
<dbReference type="InterPro" id="IPR007159">
    <property type="entry name" value="SpoVT-AbrB_dom"/>
</dbReference>
<dbReference type="InterPro" id="IPR037914">
    <property type="entry name" value="SpoVT-AbrB_sf"/>
</dbReference>
<dbReference type="InterPro" id="IPR051734">
    <property type="entry name" value="VapB_TA_antitoxins"/>
</dbReference>
<dbReference type="PANTHER" id="PTHR37550">
    <property type="entry name" value="ANTITOXIN VAPB1"/>
    <property type="match status" value="1"/>
</dbReference>
<dbReference type="PANTHER" id="PTHR37550:SF3">
    <property type="entry name" value="ANTITOXIN VAPB1"/>
    <property type="match status" value="1"/>
</dbReference>
<dbReference type="Pfam" id="PF04014">
    <property type="entry name" value="MazE_antitoxin"/>
    <property type="match status" value="1"/>
</dbReference>
<dbReference type="SMART" id="SM00966">
    <property type="entry name" value="SpoVT_AbrB"/>
    <property type="match status" value="1"/>
</dbReference>
<dbReference type="SUPFAM" id="SSF89447">
    <property type="entry name" value="AbrB/MazE/MraZ-like"/>
    <property type="match status" value="1"/>
</dbReference>
<dbReference type="PROSITE" id="PS51740">
    <property type="entry name" value="SPOVT_ABRB"/>
    <property type="match status" value="1"/>
</dbReference>
<gene>
    <name type="primary">vapB1</name>
    <name type="ordered locus">HI_0321</name>
</gene>
<accession>Q57534</accession>
<protein>
    <recommendedName>
        <fullName>Antitoxin VapB1</fullName>
    </recommendedName>
</protein>
<proteinExistence type="evidence at protein level"/>
<reference key="1">
    <citation type="journal article" date="1995" name="Science">
        <title>Whole-genome random sequencing and assembly of Haemophilus influenzae Rd.</title>
        <authorList>
            <person name="Fleischmann R.D."/>
            <person name="Adams M.D."/>
            <person name="White O."/>
            <person name="Clayton R.A."/>
            <person name="Kirkness E.F."/>
            <person name="Kerlavage A.R."/>
            <person name="Bult C.J."/>
            <person name="Tomb J.-F."/>
            <person name="Dougherty B.A."/>
            <person name="Merrick J.M."/>
            <person name="McKenney K."/>
            <person name="Sutton G.G."/>
            <person name="FitzHugh W."/>
            <person name="Fields C.A."/>
            <person name="Gocayne J.D."/>
            <person name="Scott J.D."/>
            <person name="Shirley R."/>
            <person name="Liu L.-I."/>
            <person name="Glodek A."/>
            <person name="Kelley J.M."/>
            <person name="Weidman J.F."/>
            <person name="Phillips C.A."/>
            <person name="Spriggs T."/>
            <person name="Hedblom E."/>
            <person name="Cotton M.D."/>
            <person name="Utterback T.R."/>
            <person name="Hanna M.C."/>
            <person name="Nguyen D.T."/>
            <person name="Saudek D.M."/>
            <person name="Brandon R.C."/>
            <person name="Fine L.D."/>
            <person name="Fritchman J.L."/>
            <person name="Fuhrmann J.L."/>
            <person name="Geoghagen N.S.M."/>
            <person name="Gnehm C.L."/>
            <person name="McDonald L.A."/>
            <person name="Small K.V."/>
            <person name="Fraser C.M."/>
            <person name="Smith H.O."/>
            <person name="Venter J.C."/>
        </authorList>
    </citation>
    <scope>NUCLEOTIDE SEQUENCE [LARGE SCALE GENOMIC DNA]</scope>
    <source>
        <strain>ATCC 51907 / DSM 11121 / KW20 / Rd</strain>
    </source>
</reference>
<reference key="2">
    <citation type="journal article" date="2000" name="Electrophoresis">
        <title>Two-dimensional map of the proteome of Haemophilus influenzae.</title>
        <authorList>
            <person name="Langen H."/>
            <person name="Takacs B."/>
            <person name="Evers S."/>
            <person name="Berndt P."/>
            <person name="Lahm H.W."/>
            <person name="Wipf B."/>
            <person name="Gray C."/>
            <person name="Fountoulakis M."/>
        </authorList>
    </citation>
    <scope>IDENTIFICATION BY MASS SPECTROMETRY</scope>
    <source>
        <strain>ATCC 51907 / DSM 11121 / KW20 / Rd</strain>
    </source>
</reference>
<organism>
    <name type="scientific">Haemophilus influenzae (strain ATCC 51907 / DSM 11121 / KW20 / Rd)</name>
    <dbReference type="NCBI Taxonomy" id="71421"/>
    <lineage>
        <taxon>Bacteria</taxon>
        <taxon>Pseudomonadati</taxon>
        <taxon>Pseudomonadota</taxon>
        <taxon>Gammaproteobacteria</taxon>
        <taxon>Pasteurellales</taxon>
        <taxon>Pasteurellaceae</taxon>
        <taxon>Haemophilus</taxon>
    </lineage>
</organism>
<evidence type="ECO:0000250" key="1">
    <source>
        <dbReference type="UniProtKB" id="Q4QNL8"/>
    </source>
</evidence>
<evidence type="ECO:0000255" key="2">
    <source>
        <dbReference type="PROSITE-ProRule" id="PRU01076"/>
    </source>
</evidence>
<evidence type="ECO:0000305" key="3"/>
<evidence type="ECO:0007829" key="4">
    <source>
        <dbReference type="PDB" id="6NKL"/>
    </source>
</evidence>
<comment type="function">
    <text evidence="1">Antitoxin component of a type II toxin-antitoxin (TA) system. Neutralizes the effect of toxin VapC1 (By similarity).</text>
</comment>
<comment type="similarity">
    <text evidence="3">Belongs to the VapB family.</text>
</comment>
<name>VAPB1_HAEIN</name>